<sequence length="291" mass="32688">MATLDDLKKRIASVKSTQKITKAMKMVAAAKLRRAQENAEKGRPYSEKMNNIILNLSSGISDKENAPKLLSGTGEDKVHLCIVLTSDRGLCGGFNTNIIKKAKTYFQKISDEGKTLKIITVGSKGYDQLKRVYKDAIVERISFKDSKTINYLDAEKVGKMIIENFEKEEFDVCTIFYNKFKNVITQIPQEQQIIPLKTSEAEENSSEDNYEFEPDEDEILSNLLPKNISTQIFKAMLENSASEQGSRMSAMDNATRNAGEMVDKLTIEYNRSRQAAITKELIEIISGAESL</sequence>
<evidence type="ECO:0000255" key="1">
    <source>
        <dbReference type="HAMAP-Rule" id="MF_00815"/>
    </source>
</evidence>
<dbReference type="EMBL" id="CP000084">
    <property type="protein sequence ID" value="AAZ21052.1"/>
    <property type="molecule type" value="Genomic_DNA"/>
</dbReference>
<dbReference type="RefSeq" id="WP_011281555.1">
    <property type="nucleotide sequence ID" value="NC_007205.1"/>
</dbReference>
<dbReference type="SMR" id="Q4FP37"/>
<dbReference type="STRING" id="335992.SAR11_0231"/>
<dbReference type="GeneID" id="66294728"/>
<dbReference type="KEGG" id="pub:SAR11_0231"/>
<dbReference type="eggNOG" id="COG0224">
    <property type="taxonomic scope" value="Bacteria"/>
</dbReference>
<dbReference type="HOGENOM" id="CLU_050669_0_1_5"/>
<dbReference type="OrthoDB" id="9812769at2"/>
<dbReference type="Proteomes" id="UP000002528">
    <property type="component" value="Chromosome"/>
</dbReference>
<dbReference type="GO" id="GO:0005886">
    <property type="term" value="C:plasma membrane"/>
    <property type="evidence" value="ECO:0007669"/>
    <property type="project" value="UniProtKB-SubCell"/>
</dbReference>
<dbReference type="GO" id="GO:0045259">
    <property type="term" value="C:proton-transporting ATP synthase complex"/>
    <property type="evidence" value="ECO:0007669"/>
    <property type="project" value="UniProtKB-KW"/>
</dbReference>
<dbReference type="GO" id="GO:0005524">
    <property type="term" value="F:ATP binding"/>
    <property type="evidence" value="ECO:0007669"/>
    <property type="project" value="UniProtKB-UniRule"/>
</dbReference>
<dbReference type="GO" id="GO:0046933">
    <property type="term" value="F:proton-transporting ATP synthase activity, rotational mechanism"/>
    <property type="evidence" value="ECO:0007669"/>
    <property type="project" value="UniProtKB-UniRule"/>
</dbReference>
<dbReference type="GO" id="GO:0042777">
    <property type="term" value="P:proton motive force-driven plasma membrane ATP synthesis"/>
    <property type="evidence" value="ECO:0007669"/>
    <property type="project" value="UniProtKB-UniRule"/>
</dbReference>
<dbReference type="CDD" id="cd12151">
    <property type="entry name" value="F1-ATPase_gamma"/>
    <property type="match status" value="1"/>
</dbReference>
<dbReference type="FunFam" id="1.10.287.80:FF:000001">
    <property type="entry name" value="ATP synthase gamma chain"/>
    <property type="match status" value="1"/>
</dbReference>
<dbReference type="FunFam" id="1.10.287.80:FF:000003">
    <property type="entry name" value="ATP synthase gamma chain, chloroplastic"/>
    <property type="match status" value="1"/>
</dbReference>
<dbReference type="Gene3D" id="3.40.1380.10">
    <property type="match status" value="1"/>
</dbReference>
<dbReference type="Gene3D" id="1.10.287.80">
    <property type="entry name" value="ATP synthase, gamma subunit, helix hairpin domain"/>
    <property type="match status" value="1"/>
</dbReference>
<dbReference type="HAMAP" id="MF_00815">
    <property type="entry name" value="ATP_synth_gamma_bact"/>
    <property type="match status" value="1"/>
</dbReference>
<dbReference type="InterPro" id="IPR035968">
    <property type="entry name" value="ATP_synth_F1_ATPase_gsu"/>
</dbReference>
<dbReference type="InterPro" id="IPR000131">
    <property type="entry name" value="ATP_synth_F1_gsu"/>
</dbReference>
<dbReference type="InterPro" id="IPR023632">
    <property type="entry name" value="ATP_synth_F1_gsu_CS"/>
</dbReference>
<dbReference type="NCBIfam" id="TIGR01146">
    <property type="entry name" value="ATPsyn_F1gamma"/>
    <property type="match status" value="1"/>
</dbReference>
<dbReference type="NCBIfam" id="NF004146">
    <property type="entry name" value="PRK05621.1-4"/>
    <property type="match status" value="1"/>
</dbReference>
<dbReference type="PANTHER" id="PTHR11693">
    <property type="entry name" value="ATP SYNTHASE GAMMA CHAIN"/>
    <property type="match status" value="1"/>
</dbReference>
<dbReference type="PANTHER" id="PTHR11693:SF22">
    <property type="entry name" value="ATP SYNTHASE SUBUNIT GAMMA, MITOCHONDRIAL"/>
    <property type="match status" value="1"/>
</dbReference>
<dbReference type="Pfam" id="PF00231">
    <property type="entry name" value="ATP-synt"/>
    <property type="match status" value="1"/>
</dbReference>
<dbReference type="PIRSF" id="PIRSF039089">
    <property type="entry name" value="ATP_synthase_gamma"/>
    <property type="match status" value="1"/>
</dbReference>
<dbReference type="PRINTS" id="PR00126">
    <property type="entry name" value="ATPASEGAMMA"/>
</dbReference>
<dbReference type="SUPFAM" id="SSF52943">
    <property type="entry name" value="ATP synthase (F1-ATPase), gamma subunit"/>
    <property type="match status" value="1"/>
</dbReference>
<dbReference type="PROSITE" id="PS00153">
    <property type="entry name" value="ATPASE_GAMMA"/>
    <property type="match status" value="1"/>
</dbReference>
<organism>
    <name type="scientific">Pelagibacter ubique (strain HTCC1062)</name>
    <dbReference type="NCBI Taxonomy" id="335992"/>
    <lineage>
        <taxon>Bacteria</taxon>
        <taxon>Pseudomonadati</taxon>
        <taxon>Pseudomonadota</taxon>
        <taxon>Alphaproteobacteria</taxon>
        <taxon>Candidatus Pelagibacterales</taxon>
        <taxon>Candidatus Pelagibacteraceae</taxon>
        <taxon>Candidatus Pelagibacter</taxon>
    </lineage>
</organism>
<keyword id="KW-0066">ATP synthesis</keyword>
<keyword id="KW-0997">Cell inner membrane</keyword>
<keyword id="KW-1003">Cell membrane</keyword>
<keyword id="KW-0139">CF(1)</keyword>
<keyword id="KW-0375">Hydrogen ion transport</keyword>
<keyword id="KW-0406">Ion transport</keyword>
<keyword id="KW-0472">Membrane</keyword>
<keyword id="KW-1185">Reference proteome</keyword>
<keyword id="KW-0813">Transport</keyword>
<gene>
    <name evidence="1" type="primary">atpG</name>
    <name type="ordered locus">SAR11_0231</name>
</gene>
<comment type="function">
    <text evidence="1">Produces ATP from ADP in the presence of a proton gradient across the membrane. The gamma chain is believed to be important in regulating ATPase activity and the flow of protons through the CF(0) complex.</text>
</comment>
<comment type="subunit">
    <text evidence="1">F-type ATPases have 2 components, CF(1) - the catalytic core - and CF(0) - the membrane proton channel. CF(1) has five subunits: alpha(3), beta(3), gamma(1), delta(1), epsilon(1). CF(0) has three main subunits: a, b and c.</text>
</comment>
<comment type="subcellular location">
    <subcellularLocation>
        <location evidence="1">Cell inner membrane</location>
        <topology evidence="1">Peripheral membrane protein</topology>
    </subcellularLocation>
</comment>
<comment type="similarity">
    <text evidence="1">Belongs to the ATPase gamma chain family.</text>
</comment>
<reference key="1">
    <citation type="journal article" date="2005" name="Science">
        <title>Genome streamlining in a cosmopolitan oceanic bacterium.</title>
        <authorList>
            <person name="Giovannoni S.J."/>
            <person name="Tripp H.J."/>
            <person name="Givan S."/>
            <person name="Podar M."/>
            <person name="Vergin K.L."/>
            <person name="Baptista D."/>
            <person name="Bibbs L."/>
            <person name="Eads J."/>
            <person name="Richardson T.H."/>
            <person name="Noordewier M."/>
            <person name="Rappe M.S."/>
            <person name="Short J.M."/>
            <person name="Carrington J.C."/>
            <person name="Mathur E.J."/>
        </authorList>
    </citation>
    <scope>NUCLEOTIDE SEQUENCE [LARGE SCALE GENOMIC DNA]</scope>
    <source>
        <strain>HTCC1062</strain>
    </source>
</reference>
<name>ATPG_PELUB</name>
<proteinExistence type="inferred from homology"/>
<feature type="chain" id="PRO_0000073336" description="ATP synthase gamma chain">
    <location>
        <begin position="1"/>
        <end position="291"/>
    </location>
</feature>
<accession>Q4FP37</accession>
<protein>
    <recommendedName>
        <fullName evidence="1">ATP synthase gamma chain</fullName>
    </recommendedName>
    <alternativeName>
        <fullName evidence="1">ATP synthase F1 sector gamma subunit</fullName>
    </alternativeName>
    <alternativeName>
        <fullName evidence="1">F-ATPase gamma subunit</fullName>
    </alternativeName>
</protein>